<keyword id="KW-0143">Chaperone</keyword>
<keyword id="KW-0574">Periplasm</keyword>
<keyword id="KW-0653">Protein transport</keyword>
<keyword id="KW-0732">Signal</keyword>
<keyword id="KW-0813">Transport</keyword>
<name>LOLA_YERPY</name>
<comment type="function">
    <text evidence="1">Participates in the translocation of lipoproteins from the inner membrane to the outer membrane. Only forms a complex with a lipoprotein if the residue after the N-terminal Cys is not an aspartate (The Asp acts as a targeting signal to indicate that the lipoprotein should stay in the inner membrane).</text>
</comment>
<comment type="subunit">
    <text evidence="1">Monomer.</text>
</comment>
<comment type="subcellular location">
    <subcellularLocation>
        <location evidence="1">Periplasm</location>
    </subcellularLocation>
</comment>
<comment type="similarity">
    <text evidence="1">Belongs to the LolA family.</text>
</comment>
<dbReference type="EMBL" id="CP000950">
    <property type="protein sequence ID" value="ACA68961.1"/>
    <property type="molecule type" value="Genomic_DNA"/>
</dbReference>
<dbReference type="RefSeq" id="WP_002211338.1">
    <property type="nucleotide sequence ID" value="NZ_CP009792.1"/>
</dbReference>
<dbReference type="SMR" id="B1JRF3"/>
<dbReference type="GeneID" id="57977173"/>
<dbReference type="KEGG" id="ypy:YPK_2684"/>
<dbReference type="PATRIC" id="fig|502800.11.peg.3383"/>
<dbReference type="GO" id="GO:0030288">
    <property type="term" value="C:outer membrane-bounded periplasmic space"/>
    <property type="evidence" value="ECO:0007669"/>
    <property type="project" value="TreeGrafter"/>
</dbReference>
<dbReference type="GO" id="GO:0044874">
    <property type="term" value="P:lipoprotein localization to outer membrane"/>
    <property type="evidence" value="ECO:0007669"/>
    <property type="project" value="UniProtKB-UniRule"/>
</dbReference>
<dbReference type="GO" id="GO:0042953">
    <property type="term" value="P:lipoprotein transport"/>
    <property type="evidence" value="ECO:0007669"/>
    <property type="project" value="InterPro"/>
</dbReference>
<dbReference type="CDD" id="cd16325">
    <property type="entry name" value="LolA"/>
    <property type="match status" value="1"/>
</dbReference>
<dbReference type="FunFam" id="2.50.20.10:FF:000001">
    <property type="entry name" value="Outer-membrane lipoprotein carrier protein"/>
    <property type="match status" value="1"/>
</dbReference>
<dbReference type="Gene3D" id="2.50.20.10">
    <property type="entry name" value="Lipoprotein localisation LolA/LolB/LppX"/>
    <property type="match status" value="1"/>
</dbReference>
<dbReference type="HAMAP" id="MF_00240">
    <property type="entry name" value="LolA"/>
    <property type="match status" value="1"/>
</dbReference>
<dbReference type="InterPro" id="IPR029046">
    <property type="entry name" value="LolA/LolB/LppX"/>
</dbReference>
<dbReference type="InterPro" id="IPR004564">
    <property type="entry name" value="OM_lipoprot_carrier_LolA-like"/>
</dbReference>
<dbReference type="InterPro" id="IPR018323">
    <property type="entry name" value="OM_lipoprot_carrier_LolA_Pbac"/>
</dbReference>
<dbReference type="NCBIfam" id="TIGR00547">
    <property type="entry name" value="lolA"/>
    <property type="match status" value="1"/>
</dbReference>
<dbReference type="PANTHER" id="PTHR35869">
    <property type="entry name" value="OUTER-MEMBRANE LIPOPROTEIN CARRIER PROTEIN"/>
    <property type="match status" value="1"/>
</dbReference>
<dbReference type="PANTHER" id="PTHR35869:SF1">
    <property type="entry name" value="OUTER-MEMBRANE LIPOPROTEIN CARRIER PROTEIN"/>
    <property type="match status" value="1"/>
</dbReference>
<dbReference type="Pfam" id="PF03548">
    <property type="entry name" value="LolA"/>
    <property type="match status" value="1"/>
</dbReference>
<dbReference type="SUPFAM" id="SSF89392">
    <property type="entry name" value="Prokaryotic lipoproteins and lipoprotein localization factors"/>
    <property type="match status" value="1"/>
</dbReference>
<protein>
    <recommendedName>
        <fullName evidence="1">Outer-membrane lipoprotein carrier protein</fullName>
    </recommendedName>
</protein>
<proteinExistence type="inferred from homology"/>
<evidence type="ECO:0000255" key="1">
    <source>
        <dbReference type="HAMAP-Rule" id="MF_00240"/>
    </source>
</evidence>
<reference key="1">
    <citation type="submission" date="2008-02" db="EMBL/GenBank/DDBJ databases">
        <title>Complete sequence of Yersinia pseudotuberculosis YPIII.</title>
        <authorList>
            <consortium name="US DOE Joint Genome Institute"/>
            <person name="Copeland A."/>
            <person name="Lucas S."/>
            <person name="Lapidus A."/>
            <person name="Glavina del Rio T."/>
            <person name="Dalin E."/>
            <person name="Tice H."/>
            <person name="Bruce D."/>
            <person name="Goodwin L."/>
            <person name="Pitluck S."/>
            <person name="Munk A.C."/>
            <person name="Brettin T."/>
            <person name="Detter J.C."/>
            <person name="Han C."/>
            <person name="Tapia R."/>
            <person name="Schmutz J."/>
            <person name="Larimer F."/>
            <person name="Land M."/>
            <person name="Hauser L."/>
            <person name="Challacombe J.F."/>
            <person name="Green L."/>
            <person name="Lindler L.E."/>
            <person name="Nikolich M.P."/>
            <person name="Richardson P."/>
        </authorList>
    </citation>
    <scope>NUCLEOTIDE SEQUENCE [LARGE SCALE GENOMIC DNA]</scope>
    <source>
        <strain>YPIII</strain>
    </source>
</reference>
<feature type="signal peptide" evidence="1">
    <location>
        <begin position="1"/>
        <end position="21"/>
    </location>
</feature>
<feature type="chain" id="PRO_5000316175" description="Outer-membrane lipoprotein carrier protein">
    <location>
        <begin position="22"/>
        <end position="202"/>
    </location>
</feature>
<sequence length="202" mass="22242">MKRLLVACCFLSGLISASALADASTDLQNRLSKVNSFHASFSQAVTSSDGAVVQEGEGELWVKRPNLFNWHMTSPDESVLISDGETLWFYNPFVEQATATWLKNATGNTPFMLITRNNPDDWKQYNVKQKGDDFELTPKSASGNLKQFAISVTPSGTIKSFTAVEQDGQRSAYTLKSQQSSVVDASKFTFTPPKGVTLDDQR</sequence>
<organism>
    <name type="scientific">Yersinia pseudotuberculosis serotype O:3 (strain YPIII)</name>
    <dbReference type="NCBI Taxonomy" id="502800"/>
    <lineage>
        <taxon>Bacteria</taxon>
        <taxon>Pseudomonadati</taxon>
        <taxon>Pseudomonadota</taxon>
        <taxon>Gammaproteobacteria</taxon>
        <taxon>Enterobacterales</taxon>
        <taxon>Yersiniaceae</taxon>
        <taxon>Yersinia</taxon>
    </lineage>
</organism>
<accession>B1JRF3</accession>
<gene>
    <name evidence="1" type="primary">lolA</name>
    <name type="ordered locus">YPK_2684</name>
</gene>